<dbReference type="EC" id="2.3.1.191" evidence="1"/>
<dbReference type="EMBL" id="CP000251">
    <property type="protein sequence ID" value="ABC80858.1"/>
    <property type="molecule type" value="Genomic_DNA"/>
</dbReference>
<dbReference type="RefSeq" id="WP_011420141.1">
    <property type="nucleotide sequence ID" value="NC_007760.1"/>
</dbReference>
<dbReference type="SMR" id="Q2IPX9"/>
<dbReference type="STRING" id="290397.Adeh_1083"/>
<dbReference type="KEGG" id="ade:Adeh_1083"/>
<dbReference type="eggNOG" id="COG1044">
    <property type="taxonomic scope" value="Bacteria"/>
</dbReference>
<dbReference type="HOGENOM" id="CLU_049865_0_0_7"/>
<dbReference type="OrthoDB" id="9784739at2"/>
<dbReference type="UniPathway" id="UPA00973"/>
<dbReference type="Proteomes" id="UP000001935">
    <property type="component" value="Chromosome"/>
</dbReference>
<dbReference type="GO" id="GO:0016020">
    <property type="term" value="C:membrane"/>
    <property type="evidence" value="ECO:0007669"/>
    <property type="project" value="GOC"/>
</dbReference>
<dbReference type="GO" id="GO:0016410">
    <property type="term" value="F:N-acyltransferase activity"/>
    <property type="evidence" value="ECO:0007669"/>
    <property type="project" value="InterPro"/>
</dbReference>
<dbReference type="GO" id="GO:0009245">
    <property type="term" value="P:lipid A biosynthetic process"/>
    <property type="evidence" value="ECO:0007669"/>
    <property type="project" value="UniProtKB-UniRule"/>
</dbReference>
<dbReference type="CDD" id="cd03352">
    <property type="entry name" value="LbH_LpxD"/>
    <property type="match status" value="1"/>
</dbReference>
<dbReference type="Gene3D" id="2.160.10.10">
    <property type="entry name" value="Hexapeptide repeat proteins"/>
    <property type="match status" value="1"/>
</dbReference>
<dbReference type="Gene3D" id="3.40.1390.10">
    <property type="entry name" value="MurE/MurF, N-terminal domain"/>
    <property type="match status" value="1"/>
</dbReference>
<dbReference type="HAMAP" id="MF_00523">
    <property type="entry name" value="LpxD"/>
    <property type="match status" value="1"/>
</dbReference>
<dbReference type="InterPro" id="IPR001451">
    <property type="entry name" value="Hexapep"/>
</dbReference>
<dbReference type="InterPro" id="IPR007691">
    <property type="entry name" value="LpxD"/>
</dbReference>
<dbReference type="InterPro" id="IPR011004">
    <property type="entry name" value="Trimer_LpxA-like_sf"/>
</dbReference>
<dbReference type="InterPro" id="IPR020573">
    <property type="entry name" value="UDP_GlcNAc_AcTrfase_non-rep"/>
</dbReference>
<dbReference type="NCBIfam" id="TIGR01853">
    <property type="entry name" value="lipid_A_lpxD"/>
    <property type="match status" value="1"/>
</dbReference>
<dbReference type="NCBIfam" id="NF002060">
    <property type="entry name" value="PRK00892.1"/>
    <property type="match status" value="1"/>
</dbReference>
<dbReference type="PANTHER" id="PTHR43378">
    <property type="entry name" value="UDP-3-O-ACYLGLUCOSAMINE N-ACYLTRANSFERASE"/>
    <property type="match status" value="1"/>
</dbReference>
<dbReference type="PANTHER" id="PTHR43378:SF2">
    <property type="entry name" value="UDP-3-O-ACYLGLUCOSAMINE N-ACYLTRANSFERASE 1, MITOCHONDRIAL-RELATED"/>
    <property type="match status" value="1"/>
</dbReference>
<dbReference type="Pfam" id="PF00132">
    <property type="entry name" value="Hexapep"/>
    <property type="match status" value="1"/>
</dbReference>
<dbReference type="Pfam" id="PF04613">
    <property type="entry name" value="LpxD"/>
    <property type="match status" value="1"/>
</dbReference>
<dbReference type="SUPFAM" id="SSF51161">
    <property type="entry name" value="Trimeric LpxA-like enzymes"/>
    <property type="match status" value="1"/>
</dbReference>
<dbReference type="PROSITE" id="PS00101">
    <property type="entry name" value="HEXAPEP_TRANSFERASES"/>
    <property type="match status" value="1"/>
</dbReference>
<sequence>MASYTLAELAARVGGQVDGDGKLRLEGIAPLEEATAAEISFFSNRKYRKAFEASRAGAVVVEPGEKVPAGRPVLRVVNAYLAFAKISTLFHPPREAMPEVAPTAVIHPTARVHPSAQVMPLACVGPDAQVGARTILFPGVHVADGARVGEDCVLYHNVVVRERCAVGNRVILQPGCVVGSDGFGFAFDPDGEGKGPRHYKVPQVGNVVIEDDVEVGANTCVDRATLGSTRIGRGAKIDNLVQIAHNVQVGPLSLLVSQVGVAGSTKLGMGVVAGGQAGIVGHLEIGDGVRIGAQSGVMADVEAGETVSGSPAVPHGNWLKAMASLDHLHDMRKELRELRREVERLRADAGEDEP</sequence>
<feature type="chain" id="PRO_0000264345" description="UDP-3-O-acylglucosamine N-acyltransferase">
    <location>
        <begin position="1"/>
        <end position="354"/>
    </location>
</feature>
<feature type="active site" description="Proton acceptor" evidence="1">
    <location>
        <position position="245"/>
    </location>
</feature>
<accession>Q2IPX9</accession>
<evidence type="ECO:0000255" key="1">
    <source>
        <dbReference type="HAMAP-Rule" id="MF_00523"/>
    </source>
</evidence>
<proteinExistence type="inferred from homology"/>
<keyword id="KW-0012">Acyltransferase</keyword>
<keyword id="KW-0441">Lipid A biosynthesis</keyword>
<keyword id="KW-0444">Lipid biosynthesis</keyword>
<keyword id="KW-0443">Lipid metabolism</keyword>
<keyword id="KW-1185">Reference proteome</keyword>
<keyword id="KW-0677">Repeat</keyword>
<keyword id="KW-0808">Transferase</keyword>
<protein>
    <recommendedName>
        <fullName evidence="1">UDP-3-O-acylglucosamine N-acyltransferase</fullName>
        <ecNumber evidence="1">2.3.1.191</ecNumber>
    </recommendedName>
</protein>
<reference key="1">
    <citation type="submission" date="2006-01" db="EMBL/GenBank/DDBJ databases">
        <title>Complete sequence of Anaeromyxobacter dehalogenans 2CP-C.</title>
        <authorList>
            <person name="Copeland A."/>
            <person name="Lucas S."/>
            <person name="Lapidus A."/>
            <person name="Barry K."/>
            <person name="Detter J.C."/>
            <person name="Glavina T."/>
            <person name="Hammon N."/>
            <person name="Israni S."/>
            <person name="Pitluck S."/>
            <person name="Brettin T."/>
            <person name="Bruce D."/>
            <person name="Han C."/>
            <person name="Tapia R."/>
            <person name="Gilna P."/>
            <person name="Kiss H."/>
            <person name="Schmutz J."/>
            <person name="Larimer F."/>
            <person name="Land M."/>
            <person name="Kyrpides N."/>
            <person name="Anderson I."/>
            <person name="Sanford R.A."/>
            <person name="Ritalahti K.M."/>
            <person name="Thomas H.S."/>
            <person name="Kirby J.R."/>
            <person name="Zhulin I.B."/>
            <person name="Loeffler F.E."/>
            <person name="Richardson P."/>
        </authorList>
    </citation>
    <scope>NUCLEOTIDE SEQUENCE [LARGE SCALE GENOMIC DNA]</scope>
    <source>
        <strain>2CP-C</strain>
    </source>
</reference>
<gene>
    <name evidence="1" type="primary">lpxD</name>
    <name type="ordered locus">Adeh_1083</name>
</gene>
<comment type="function">
    <text evidence="1">Catalyzes the N-acylation of UDP-3-O-acylglucosamine using 3-hydroxyacyl-ACP as the acyl donor. Is involved in the biosynthesis of lipid A, a phosphorylated glycolipid that anchors the lipopolysaccharide to the outer membrane of the cell.</text>
</comment>
<comment type="catalytic activity">
    <reaction evidence="1">
        <text>a UDP-3-O-[(3R)-3-hydroxyacyl]-alpha-D-glucosamine + a (3R)-hydroxyacyl-[ACP] = a UDP-2-N,3-O-bis[(3R)-3-hydroxyacyl]-alpha-D-glucosamine + holo-[ACP] + H(+)</text>
        <dbReference type="Rhea" id="RHEA:53836"/>
        <dbReference type="Rhea" id="RHEA-COMP:9685"/>
        <dbReference type="Rhea" id="RHEA-COMP:9945"/>
        <dbReference type="ChEBI" id="CHEBI:15378"/>
        <dbReference type="ChEBI" id="CHEBI:64479"/>
        <dbReference type="ChEBI" id="CHEBI:78827"/>
        <dbReference type="ChEBI" id="CHEBI:137740"/>
        <dbReference type="ChEBI" id="CHEBI:137748"/>
        <dbReference type="EC" id="2.3.1.191"/>
    </reaction>
</comment>
<comment type="pathway">
    <text evidence="1">Bacterial outer membrane biogenesis; LPS lipid A biosynthesis.</text>
</comment>
<comment type="subunit">
    <text evidence="1">Homotrimer.</text>
</comment>
<comment type="similarity">
    <text evidence="1">Belongs to the transferase hexapeptide repeat family. LpxD subfamily.</text>
</comment>
<organism>
    <name type="scientific">Anaeromyxobacter dehalogenans (strain 2CP-C)</name>
    <dbReference type="NCBI Taxonomy" id="290397"/>
    <lineage>
        <taxon>Bacteria</taxon>
        <taxon>Pseudomonadati</taxon>
        <taxon>Myxococcota</taxon>
        <taxon>Myxococcia</taxon>
        <taxon>Myxococcales</taxon>
        <taxon>Cystobacterineae</taxon>
        <taxon>Anaeromyxobacteraceae</taxon>
        <taxon>Anaeromyxobacter</taxon>
    </lineage>
</organism>
<name>LPXD_ANADE</name>